<gene>
    <name evidence="1" type="primary">ligA</name>
    <name type="ordered locus">Bcen2424_2024</name>
</gene>
<name>DNLJ_BURCH</name>
<feature type="chain" id="PRO_0000313159" description="DNA ligase">
    <location>
        <begin position="1"/>
        <end position="691"/>
    </location>
</feature>
<feature type="domain" description="BRCT" evidence="1">
    <location>
        <begin position="610"/>
        <end position="691"/>
    </location>
</feature>
<feature type="active site" description="N6-AMP-lysine intermediate" evidence="1">
    <location>
        <position position="132"/>
    </location>
</feature>
<feature type="binding site" evidence="1">
    <location>
        <begin position="41"/>
        <end position="45"/>
    </location>
    <ligand>
        <name>NAD(+)</name>
        <dbReference type="ChEBI" id="CHEBI:57540"/>
    </ligand>
</feature>
<feature type="binding site" evidence="1">
    <location>
        <begin position="90"/>
        <end position="91"/>
    </location>
    <ligand>
        <name>NAD(+)</name>
        <dbReference type="ChEBI" id="CHEBI:57540"/>
    </ligand>
</feature>
<feature type="binding site" evidence="1">
    <location>
        <position position="130"/>
    </location>
    <ligand>
        <name>NAD(+)</name>
        <dbReference type="ChEBI" id="CHEBI:57540"/>
    </ligand>
</feature>
<feature type="binding site" evidence="1">
    <location>
        <position position="153"/>
    </location>
    <ligand>
        <name>NAD(+)</name>
        <dbReference type="ChEBI" id="CHEBI:57540"/>
    </ligand>
</feature>
<feature type="binding site" evidence="1">
    <location>
        <position position="190"/>
    </location>
    <ligand>
        <name>NAD(+)</name>
        <dbReference type="ChEBI" id="CHEBI:57540"/>
    </ligand>
</feature>
<feature type="binding site" evidence="1">
    <location>
        <position position="307"/>
    </location>
    <ligand>
        <name>NAD(+)</name>
        <dbReference type="ChEBI" id="CHEBI:57540"/>
    </ligand>
</feature>
<feature type="binding site" evidence="1">
    <location>
        <position position="331"/>
    </location>
    <ligand>
        <name>NAD(+)</name>
        <dbReference type="ChEBI" id="CHEBI:57540"/>
    </ligand>
</feature>
<feature type="binding site" evidence="1">
    <location>
        <position position="425"/>
    </location>
    <ligand>
        <name>Zn(2+)</name>
        <dbReference type="ChEBI" id="CHEBI:29105"/>
    </ligand>
</feature>
<feature type="binding site" evidence="1">
    <location>
        <position position="428"/>
    </location>
    <ligand>
        <name>Zn(2+)</name>
        <dbReference type="ChEBI" id="CHEBI:29105"/>
    </ligand>
</feature>
<feature type="binding site" evidence="1">
    <location>
        <position position="443"/>
    </location>
    <ligand>
        <name>Zn(2+)</name>
        <dbReference type="ChEBI" id="CHEBI:29105"/>
    </ligand>
</feature>
<feature type="binding site" evidence="1">
    <location>
        <position position="449"/>
    </location>
    <ligand>
        <name>Zn(2+)</name>
        <dbReference type="ChEBI" id="CHEBI:29105"/>
    </ligand>
</feature>
<comment type="function">
    <text evidence="1">DNA ligase that catalyzes the formation of phosphodiester linkages between 5'-phosphoryl and 3'-hydroxyl groups in double-stranded DNA using NAD as a coenzyme and as the energy source for the reaction. It is essential for DNA replication and repair of damaged DNA.</text>
</comment>
<comment type="catalytic activity">
    <reaction evidence="1">
        <text>NAD(+) + (deoxyribonucleotide)n-3'-hydroxyl + 5'-phospho-(deoxyribonucleotide)m = (deoxyribonucleotide)n+m + AMP + beta-nicotinamide D-nucleotide.</text>
        <dbReference type="EC" id="6.5.1.2"/>
    </reaction>
</comment>
<comment type="cofactor">
    <cofactor evidence="1">
        <name>Mg(2+)</name>
        <dbReference type="ChEBI" id="CHEBI:18420"/>
    </cofactor>
    <cofactor evidence="1">
        <name>Mn(2+)</name>
        <dbReference type="ChEBI" id="CHEBI:29035"/>
    </cofactor>
</comment>
<comment type="similarity">
    <text evidence="1">Belongs to the NAD-dependent DNA ligase family. LigA subfamily.</text>
</comment>
<protein>
    <recommendedName>
        <fullName evidence="1">DNA ligase</fullName>
        <ecNumber evidence="1">6.5.1.2</ecNumber>
    </recommendedName>
    <alternativeName>
        <fullName evidence="1">Polydeoxyribonucleotide synthase [NAD(+)]</fullName>
    </alternativeName>
</protein>
<reference key="1">
    <citation type="submission" date="2006-08" db="EMBL/GenBank/DDBJ databases">
        <title>Complete sequence of chromosome 1 of Burkholderia cenocepacia HI2424.</title>
        <authorList>
            <person name="Copeland A."/>
            <person name="Lucas S."/>
            <person name="Lapidus A."/>
            <person name="Barry K."/>
            <person name="Detter J.C."/>
            <person name="Glavina del Rio T."/>
            <person name="Hammon N."/>
            <person name="Israni S."/>
            <person name="Pitluck S."/>
            <person name="Chain P."/>
            <person name="Malfatti S."/>
            <person name="Shin M."/>
            <person name="Vergez L."/>
            <person name="Schmutz J."/>
            <person name="Larimer F."/>
            <person name="Land M."/>
            <person name="Hauser L."/>
            <person name="Kyrpides N."/>
            <person name="Kim E."/>
            <person name="LiPuma J.J."/>
            <person name="Gonzalez C.F."/>
            <person name="Konstantinidis K."/>
            <person name="Tiedje J.M."/>
            <person name="Richardson P."/>
        </authorList>
    </citation>
    <scope>NUCLEOTIDE SEQUENCE [LARGE SCALE GENOMIC DNA]</scope>
    <source>
        <strain>HI2424</strain>
    </source>
</reference>
<dbReference type="EC" id="6.5.1.2" evidence="1"/>
<dbReference type="EMBL" id="CP000458">
    <property type="protein sequence ID" value="ABK08775.1"/>
    <property type="molecule type" value="Genomic_DNA"/>
</dbReference>
<dbReference type="RefSeq" id="WP_011694312.1">
    <property type="nucleotide sequence ID" value="NC_008542.1"/>
</dbReference>
<dbReference type="SMR" id="A0K8E8"/>
<dbReference type="KEGG" id="bch:Bcen2424_2024"/>
<dbReference type="HOGENOM" id="CLU_007764_2_1_4"/>
<dbReference type="GO" id="GO:0005829">
    <property type="term" value="C:cytosol"/>
    <property type="evidence" value="ECO:0007669"/>
    <property type="project" value="TreeGrafter"/>
</dbReference>
<dbReference type="GO" id="GO:0003677">
    <property type="term" value="F:DNA binding"/>
    <property type="evidence" value="ECO:0007669"/>
    <property type="project" value="InterPro"/>
</dbReference>
<dbReference type="GO" id="GO:0003911">
    <property type="term" value="F:DNA ligase (NAD+) activity"/>
    <property type="evidence" value="ECO:0007669"/>
    <property type="project" value="UniProtKB-UniRule"/>
</dbReference>
<dbReference type="GO" id="GO:0046872">
    <property type="term" value="F:metal ion binding"/>
    <property type="evidence" value="ECO:0007669"/>
    <property type="project" value="UniProtKB-KW"/>
</dbReference>
<dbReference type="GO" id="GO:0006281">
    <property type="term" value="P:DNA repair"/>
    <property type="evidence" value="ECO:0007669"/>
    <property type="project" value="UniProtKB-KW"/>
</dbReference>
<dbReference type="GO" id="GO:0006260">
    <property type="term" value="P:DNA replication"/>
    <property type="evidence" value="ECO:0007669"/>
    <property type="project" value="UniProtKB-KW"/>
</dbReference>
<dbReference type="CDD" id="cd17748">
    <property type="entry name" value="BRCT_DNA_ligase_like"/>
    <property type="match status" value="1"/>
</dbReference>
<dbReference type="CDD" id="cd00114">
    <property type="entry name" value="LIGANc"/>
    <property type="match status" value="1"/>
</dbReference>
<dbReference type="FunFam" id="1.10.150.20:FF:000006">
    <property type="entry name" value="DNA ligase"/>
    <property type="match status" value="1"/>
</dbReference>
<dbReference type="FunFam" id="1.10.150.20:FF:000007">
    <property type="entry name" value="DNA ligase"/>
    <property type="match status" value="1"/>
</dbReference>
<dbReference type="FunFam" id="1.10.287.610:FF:000002">
    <property type="entry name" value="DNA ligase"/>
    <property type="match status" value="1"/>
</dbReference>
<dbReference type="FunFam" id="2.40.50.140:FF:000012">
    <property type="entry name" value="DNA ligase"/>
    <property type="match status" value="1"/>
</dbReference>
<dbReference type="FunFam" id="3.30.470.30:FF:000001">
    <property type="entry name" value="DNA ligase"/>
    <property type="match status" value="1"/>
</dbReference>
<dbReference type="FunFam" id="3.40.50.10190:FF:000054">
    <property type="entry name" value="DNA ligase"/>
    <property type="match status" value="1"/>
</dbReference>
<dbReference type="Gene3D" id="6.20.10.30">
    <property type="match status" value="1"/>
</dbReference>
<dbReference type="Gene3D" id="1.10.150.20">
    <property type="entry name" value="5' to 3' exonuclease, C-terminal subdomain"/>
    <property type="match status" value="2"/>
</dbReference>
<dbReference type="Gene3D" id="3.40.50.10190">
    <property type="entry name" value="BRCT domain"/>
    <property type="match status" value="1"/>
</dbReference>
<dbReference type="Gene3D" id="3.30.470.30">
    <property type="entry name" value="DNA ligase/mRNA capping enzyme"/>
    <property type="match status" value="1"/>
</dbReference>
<dbReference type="Gene3D" id="1.10.287.610">
    <property type="entry name" value="Helix hairpin bin"/>
    <property type="match status" value="1"/>
</dbReference>
<dbReference type="Gene3D" id="2.40.50.140">
    <property type="entry name" value="Nucleic acid-binding proteins"/>
    <property type="match status" value="1"/>
</dbReference>
<dbReference type="HAMAP" id="MF_01588">
    <property type="entry name" value="DNA_ligase_A"/>
    <property type="match status" value="1"/>
</dbReference>
<dbReference type="InterPro" id="IPR001357">
    <property type="entry name" value="BRCT_dom"/>
</dbReference>
<dbReference type="InterPro" id="IPR036420">
    <property type="entry name" value="BRCT_dom_sf"/>
</dbReference>
<dbReference type="InterPro" id="IPR041663">
    <property type="entry name" value="DisA/LigA_HHH"/>
</dbReference>
<dbReference type="InterPro" id="IPR001679">
    <property type="entry name" value="DNA_ligase"/>
</dbReference>
<dbReference type="InterPro" id="IPR018239">
    <property type="entry name" value="DNA_ligase_AS"/>
</dbReference>
<dbReference type="InterPro" id="IPR033136">
    <property type="entry name" value="DNA_ligase_CS"/>
</dbReference>
<dbReference type="InterPro" id="IPR013839">
    <property type="entry name" value="DNAligase_adenylation"/>
</dbReference>
<dbReference type="InterPro" id="IPR013840">
    <property type="entry name" value="DNAligase_N"/>
</dbReference>
<dbReference type="InterPro" id="IPR003583">
    <property type="entry name" value="Hlx-hairpin-Hlx_DNA-bd_motif"/>
</dbReference>
<dbReference type="InterPro" id="IPR012340">
    <property type="entry name" value="NA-bd_OB-fold"/>
</dbReference>
<dbReference type="InterPro" id="IPR004150">
    <property type="entry name" value="NAD_DNA_ligase_OB"/>
</dbReference>
<dbReference type="InterPro" id="IPR010994">
    <property type="entry name" value="RuvA_2-like"/>
</dbReference>
<dbReference type="InterPro" id="IPR004149">
    <property type="entry name" value="Znf_DNAligase_C4"/>
</dbReference>
<dbReference type="NCBIfam" id="TIGR00575">
    <property type="entry name" value="dnlj"/>
    <property type="match status" value="1"/>
</dbReference>
<dbReference type="NCBIfam" id="NF005932">
    <property type="entry name" value="PRK07956.1"/>
    <property type="match status" value="1"/>
</dbReference>
<dbReference type="PANTHER" id="PTHR23389">
    <property type="entry name" value="CHROMOSOME TRANSMISSION FIDELITY FACTOR 18"/>
    <property type="match status" value="1"/>
</dbReference>
<dbReference type="PANTHER" id="PTHR23389:SF9">
    <property type="entry name" value="DNA LIGASE"/>
    <property type="match status" value="1"/>
</dbReference>
<dbReference type="Pfam" id="PF00533">
    <property type="entry name" value="BRCT"/>
    <property type="match status" value="1"/>
</dbReference>
<dbReference type="Pfam" id="PF01653">
    <property type="entry name" value="DNA_ligase_aden"/>
    <property type="match status" value="1"/>
</dbReference>
<dbReference type="Pfam" id="PF03120">
    <property type="entry name" value="DNA_ligase_OB"/>
    <property type="match status" value="1"/>
</dbReference>
<dbReference type="Pfam" id="PF03119">
    <property type="entry name" value="DNA_ligase_ZBD"/>
    <property type="match status" value="1"/>
</dbReference>
<dbReference type="Pfam" id="PF12826">
    <property type="entry name" value="HHH_2"/>
    <property type="match status" value="1"/>
</dbReference>
<dbReference type="Pfam" id="PF14520">
    <property type="entry name" value="HHH_5"/>
    <property type="match status" value="1"/>
</dbReference>
<dbReference type="Pfam" id="PF22745">
    <property type="entry name" value="Nlig-Ia"/>
    <property type="match status" value="1"/>
</dbReference>
<dbReference type="PIRSF" id="PIRSF001604">
    <property type="entry name" value="LigA"/>
    <property type="match status" value="1"/>
</dbReference>
<dbReference type="SMART" id="SM00292">
    <property type="entry name" value="BRCT"/>
    <property type="match status" value="1"/>
</dbReference>
<dbReference type="SMART" id="SM00278">
    <property type="entry name" value="HhH1"/>
    <property type="match status" value="3"/>
</dbReference>
<dbReference type="SMART" id="SM00532">
    <property type="entry name" value="LIGANc"/>
    <property type="match status" value="1"/>
</dbReference>
<dbReference type="SUPFAM" id="SSF52113">
    <property type="entry name" value="BRCT domain"/>
    <property type="match status" value="1"/>
</dbReference>
<dbReference type="SUPFAM" id="SSF56091">
    <property type="entry name" value="DNA ligase/mRNA capping enzyme, catalytic domain"/>
    <property type="match status" value="1"/>
</dbReference>
<dbReference type="SUPFAM" id="SSF50249">
    <property type="entry name" value="Nucleic acid-binding proteins"/>
    <property type="match status" value="1"/>
</dbReference>
<dbReference type="SUPFAM" id="SSF47781">
    <property type="entry name" value="RuvA domain 2-like"/>
    <property type="match status" value="1"/>
</dbReference>
<dbReference type="PROSITE" id="PS50172">
    <property type="entry name" value="BRCT"/>
    <property type="match status" value="1"/>
</dbReference>
<dbReference type="PROSITE" id="PS01055">
    <property type="entry name" value="DNA_LIGASE_N1"/>
    <property type="match status" value="1"/>
</dbReference>
<dbReference type="PROSITE" id="PS01056">
    <property type="entry name" value="DNA_LIGASE_N2"/>
    <property type="match status" value="1"/>
</dbReference>
<accession>A0K8E8</accession>
<organism>
    <name type="scientific">Burkholderia cenocepacia (strain HI2424)</name>
    <dbReference type="NCBI Taxonomy" id="331272"/>
    <lineage>
        <taxon>Bacteria</taxon>
        <taxon>Pseudomonadati</taxon>
        <taxon>Pseudomonadota</taxon>
        <taxon>Betaproteobacteria</taxon>
        <taxon>Burkholderiales</taxon>
        <taxon>Burkholderiaceae</taxon>
        <taxon>Burkholderia</taxon>
        <taxon>Burkholderia cepacia complex</taxon>
    </lineage>
</organism>
<evidence type="ECO:0000255" key="1">
    <source>
        <dbReference type="HAMAP-Rule" id="MF_01588"/>
    </source>
</evidence>
<proteinExistence type="inferred from homology"/>
<keyword id="KW-0227">DNA damage</keyword>
<keyword id="KW-0234">DNA repair</keyword>
<keyword id="KW-0235">DNA replication</keyword>
<keyword id="KW-0436">Ligase</keyword>
<keyword id="KW-0460">Magnesium</keyword>
<keyword id="KW-0464">Manganese</keyword>
<keyword id="KW-0479">Metal-binding</keyword>
<keyword id="KW-0520">NAD</keyword>
<keyword id="KW-0862">Zinc</keyword>
<sequence length="691" mass="75478">MARTQAEPPASQPDARAAWLRDQLERANYAYYVLDQPDLPDAEYDRLFRELQQLETDHPELVTPDSPTQRVGGEAAGGFTPVVHDAPMLSLNNGFADEDIVAFDKRVADALAKTTDLAGSVTDPVEYACELKFDGLAISLRYEQGVFVQAATRGDGTTGEDVTENVRTIRSIPLKLKGKHVPAVLDVRGEVLMFKRDFARLNERQRAAEQREFANPRNAAAGSLRQLDSKITAQRPLSFFAYGIGVLDGMPMPDTHSALLDWYESLGLPVNRERAVVHGAEGLLDFFRKVGEKRESLPYDIDGVVYKVNRRDEQERLGFVSRAPRFALAHKFPAQEALTKLVAIDVQVGRTGAITPVARLEPVFVGGATVTNATLHNEDEVRRKDIRIGDTVIVRRAGDVIPEVVGALLDRRPADAAEFVMPTECPVCGSKIERLPDEAIARCTGGLFCPAQRKQALWHFAQRRALDIDGLGEKIIDQLVELNLVRTPADLFNLGFATLAELDRFAEKSAQNLIDSLEKAKHTTLARFIYGLGIRHVGESTAKDLAKHFGSLTPIMDASIEELLEVNDVGPIVAESLHQFFAEEHNRTVIEQLRAPGKVTWPEGPPAPKAPQGVLAGKTVVLTGTLPNLTRDAAKEMLEAAGAKVAGSVSKKTDYVVAGAEAGSKLAKAEELGIPVLDEDGLHQLLEGNTP</sequence>